<evidence type="ECO:0000255" key="1">
    <source>
        <dbReference type="HAMAP-Rule" id="MF_00815"/>
    </source>
</evidence>
<gene>
    <name evidence="1" type="primary">atpG</name>
    <name type="ordered locus">Shewmr7_4018</name>
</gene>
<proteinExistence type="inferred from homology"/>
<protein>
    <recommendedName>
        <fullName evidence="1">ATP synthase gamma chain</fullName>
    </recommendedName>
    <alternativeName>
        <fullName evidence="1">ATP synthase F1 sector gamma subunit</fullName>
    </alternativeName>
    <alternativeName>
        <fullName evidence="1">F-ATPase gamma subunit</fullName>
    </alternativeName>
</protein>
<comment type="function">
    <text evidence="1">Produces ATP from ADP in the presence of a proton gradient across the membrane. The gamma chain is believed to be important in regulating ATPase activity and the flow of protons through the CF(0) complex.</text>
</comment>
<comment type="subunit">
    <text evidence="1">F-type ATPases have 2 components, CF(1) - the catalytic core - and CF(0) - the membrane proton channel. CF(1) has five subunits: alpha(3), beta(3), gamma(1), delta(1), epsilon(1). CF(0) has three main subunits: a, b and c.</text>
</comment>
<comment type="subcellular location">
    <subcellularLocation>
        <location evidence="1">Cell inner membrane</location>
        <topology evidence="1">Peripheral membrane protein</topology>
    </subcellularLocation>
</comment>
<comment type="similarity">
    <text evidence="1">Belongs to the ATPase gamma chain family.</text>
</comment>
<reference key="1">
    <citation type="submission" date="2006-08" db="EMBL/GenBank/DDBJ databases">
        <title>Complete sequence of chromosome 1 of Shewanella sp. MR-7.</title>
        <authorList>
            <person name="Copeland A."/>
            <person name="Lucas S."/>
            <person name="Lapidus A."/>
            <person name="Barry K."/>
            <person name="Detter J.C."/>
            <person name="Glavina del Rio T."/>
            <person name="Hammon N."/>
            <person name="Israni S."/>
            <person name="Dalin E."/>
            <person name="Tice H."/>
            <person name="Pitluck S."/>
            <person name="Kiss H."/>
            <person name="Brettin T."/>
            <person name="Bruce D."/>
            <person name="Han C."/>
            <person name="Tapia R."/>
            <person name="Gilna P."/>
            <person name="Schmutz J."/>
            <person name="Larimer F."/>
            <person name="Land M."/>
            <person name="Hauser L."/>
            <person name="Kyrpides N."/>
            <person name="Mikhailova N."/>
            <person name="Nealson K."/>
            <person name="Konstantinidis K."/>
            <person name="Klappenbach J."/>
            <person name="Tiedje J."/>
            <person name="Richardson P."/>
        </authorList>
    </citation>
    <scope>NUCLEOTIDE SEQUENCE [LARGE SCALE GENOMIC DNA]</scope>
    <source>
        <strain>MR-7</strain>
    </source>
</reference>
<name>ATPG_SHESR</name>
<keyword id="KW-0066">ATP synthesis</keyword>
<keyword id="KW-0997">Cell inner membrane</keyword>
<keyword id="KW-1003">Cell membrane</keyword>
<keyword id="KW-0139">CF(1)</keyword>
<keyword id="KW-0375">Hydrogen ion transport</keyword>
<keyword id="KW-0406">Ion transport</keyword>
<keyword id="KW-0472">Membrane</keyword>
<keyword id="KW-0813">Transport</keyword>
<organism>
    <name type="scientific">Shewanella sp. (strain MR-7)</name>
    <dbReference type="NCBI Taxonomy" id="60481"/>
    <lineage>
        <taxon>Bacteria</taxon>
        <taxon>Pseudomonadati</taxon>
        <taxon>Pseudomonadota</taxon>
        <taxon>Gammaproteobacteria</taxon>
        <taxon>Alteromonadales</taxon>
        <taxon>Shewanellaceae</taxon>
        <taxon>Shewanella</taxon>
    </lineage>
</organism>
<dbReference type="EMBL" id="CP000444">
    <property type="protein sequence ID" value="ABI44995.1"/>
    <property type="molecule type" value="Genomic_DNA"/>
</dbReference>
<dbReference type="SMR" id="Q0HPG0"/>
<dbReference type="KEGG" id="shm:Shewmr7_4018"/>
<dbReference type="HOGENOM" id="CLU_050669_0_1_6"/>
<dbReference type="GO" id="GO:0005886">
    <property type="term" value="C:plasma membrane"/>
    <property type="evidence" value="ECO:0007669"/>
    <property type="project" value="UniProtKB-SubCell"/>
</dbReference>
<dbReference type="GO" id="GO:0045259">
    <property type="term" value="C:proton-transporting ATP synthase complex"/>
    <property type="evidence" value="ECO:0007669"/>
    <property type="project" value="UniProtKB-KW"/>
</dbReference>
<dbReference type="GO" id="GO:0005524">
    <property type="term" value="F:ATP binding"/>
    <property type="evidence" value="ECO:0007669"/>
    <property type="project" value="UniProtKB-UniRule"/>
</dbReference>
<dbReference type="GO" id="GO:0046933">
    <property type="term" value="F:proton-transporting ATP synthase activity, rotational mechanism"/>
    <property type="evidence" value="ECO:0007669"/>
    <property type="project" value="UniProtKB-UniRule"/>
</dbReference>
<dbReference type="GO" id="GO:0042777">
    <property type="term" value="P:proton motive force-driven plasma membrane ATP synthesis"/>
    <property type="evidence" value="ECO:0007669"/>
    <property type="project" value="UniProtKB-UniRule"/>
</dbReference>
<dbReference type="CDD" id="cd12151">
    <property type="entry name" value="F1-ATPase_gamma"/>
    <property type="match status" value="1"/>
</dbReference>
<dbReference type="FunFam" id="1.10.287.80:FF:000005">
    <property type="entry name" value="ATP synthase gamma chain"/>
    <property type="match status" value="2"/>
</dbReference>
<dbReference type="FunFam" id="3.40.1380.10:FF:000001">
    <property type="entry name" value="ATP synthase gamma chain"/>
    <property type="match status" value="1"/>
</dbReference>
<dbReference type="Gene3D" id="3.40.1380.10">
    <property type="match status" value="1"/>
</dbReference>
<dbReference type="Gene3D" id="1.10.287.80">
    <property type="entry name" value="ATP synthase, gamma subunit, helix hairpin domain"/>
    <property type="match status" value="1"/>
</dbReference>
<dbReference type="HAMAP" id="MF_00815">
    <property type="entry name" value="ATP_synth_gamma_bact"/>
    <property type="match status" value="1"/>
</dbReference>
<dbReference type="InterPro" id="IPR035968">
    <property type="entry name" value="ATP_synth_F1_ATPase_gsu"/>
</dbReference>
<dbReference type="InterPro" id="IPR000131">
    <property type="entry name" value="ATP_synth_F1_gsu"/>
</dbReference>
<dbReference type="InterPro" id="IPR023632">
    <property type="entry name" value="ATP_synth_F1_gsu_CS"/>
</dbReference>
<dbReference type="NCBIfam" id="TIGR01146">
    <property type="entry name" value="ATPsyn_F1gamma"/>
    <property type="match status" value="1"/>
</dbReference>
<dbReference type="NCBIfam" id="NF004144">
    <property type="entry name" value="PRK05621.1-1"/>
    <property type="match status" value="1"/>
</dbReference>
<dbReference type="PANTHER" id="PTHR11693">
    <property type="entry name" value="ATP SYNTHASE GAMMA CHAIN"/>
    <property type="match status" value="1"/>
</dbReference>
<dbReference type="PANTHER" id="PTHR11693:SF22">
    <property type="entry name" value="ATP SYNTHASE SUBUNIT GAMMA, MITOCHONDRIAL"/>
    <property type="match status" value="1"/>
</dbReference>
<dbReference type="Pfam" id="PF00231">
    <property type="entry name" value="ATP-synt"/>
    <property type="match status" value="1"/>
</dbReference>
<dbReference type="PRINTS" id="PR00126">
    <property type="entry name" value="ATPASEGAMMA"/>
</dbReference>
<dbReference type="SUPFAM" id="SSF52943">
    <property type="entry name" value="ATP synthase (F1-ATPase), gamma subunit"/>
    <property type="match status" value="1"/>
</dbReference>
<dbReference type="PROSITE" id="PS00153">
    <property type="entry name" value="ATPASE_GAMMA"/>
    <property type="match status" value="1"/>
</dbReference>
<accession>Q0HPG0</accession>
<sequence>MAGAKEIKTKIASVKNTQKITSAMEMVAASKMRRAQDRMAASRPYAESMRKVIGHVAQGSLEYKHPYLEVREAKRVGYIVVATDRGLCGGLNVNLFKKVVADVKSWKEQGAEFEFCPIGARSVQFFKSFGGQVSAHASGLGDAPKLADLIGTVRVMLDAYNEGKLDRLYVVFNKFVNTMTQTPVIEQLLPLPKSEDDEVAHRWDYIYEPDPKALLDTLLVRYVESQVYQGVVENIASEQAARMVAMKAATDNAGTLIDDLQLVYNKARQAAITQELSEIVSGASAV</sequence>
<feature type="chain" id="PRO_1000053333" description="ATP synthase gamma chain">
    <location>
        <begin position="1"/>
        <end position="286"/>
    </location>
</feature>